<comment type="function">
    <text evidence="2">Plays an essential role in the inhibition of host immune response. Prevents the establishment of cellular antiviral state by blocking interferon-alpha/beta (IFN-alpha/beta) production and signaling pathway. Interacts with host IFIH1/MDA5 and DHX58/LGP2 to inhibit the transduction pathway involved in the activation of IFN-beta promoter, thus protecting the virus against cell antiviral state. Blocks the type I interferon signaling pathway by interacting with host TYK2 and thereby inhibiting downstream STAT1 and STAT2 phosphorylation. Moderately affects the type II interferon signaling.</text>
</comment>
<comment type="subunit">
    <text evidence="2 5 6">Interacts with host IFIH1/MDA5 and DHX58/LGP2; these interactions are involved in the inhibition of the host type I interferon signaling pathway. Interacts with host TYK2; this interaction inhibits the type I interferon signaling pathway without affecting the type II pathway. Interacts with host IRF7; this interaction inhibits IRF7 translocation to the nucleus. Interacts with host CHUK (By similarity). Interacts with host RELA/p65; this interaction inhibits the nuclear translocation of NF-KappaB (PubMed:21270162). Interacts (via N-terminus) with host STAT1 and JAK1; these interactions inhibit STAT1 phosphorylation by Jak1 and thereby the type I interferon signaling pathway (PubMed:17686504). Interacts (via C-terminus) with host STAT2; this interaction is involved in the inhibition of the host type I interferon signaling pathway. Forms a complex with host PPP1CA and PPP1CC; this interaction prevents dephosphorylation of host IFIH1/MDA5 and leads to the inhibition of the host type I interferon signaling pathway. Interacts with host IRF9; this interaction prevents the binding of IRF9 to STAT2 and thereby the type I interferon signaling pathway (By similarity).</text>
</comment>
<comment type="interaction">
    <interactant intactId="EBI-6149376">
        <id>Q77M19</id>
    </interactant>
    <interactant intactId="EBI-81249">
        <id>O15111</id>
        <label>CHUK</label>
    </interactant>
    <organismsDiffer>true</organismsDiffer>
    <experiments>2</experiments>
</comment>
<comment type="interaction">
    <interactant intactId="EBI-6149376">
        <id>Q77M19</id>
    </interactant>
    <interactant intactId="EBI-646245">
        <id>Q60680</id>
        <label>Chuk</label>
    </interactant>
    <organismsDiffer>true</organismsDiffer>
    <experiments>3</experiments>
</comment>
<comment type="interaction">
    <interactant intactId="EBI-6149376">
        <id>Q77M19</id>
    </interactant>
    <interactant intactId="EBI-968267">
        <id>Q92985</id>
        <label>IRF7</label>
    </interactant>
    <organismsDiffer>true</organismsDiffer>
    <experiments>3</experiments>
</comment>
<comment type="subcellular location">
    <subcellularLocation>
        <location evidence="1">Host cytoplasm</location>
    </subcellularLocation>
</comment>
<comment type="domain">
    <text evidence="2 5">The N-terminus interacts with host JAK1 and STAT1 (PubMed:17686504). The C-terminus interacts with host STAT2 (By similarity). The C-terminus also interacts with host PP1 (By similarity).</text>
</comment>
<comment type="RNA editing">
    <location>
        <position position="231" evidence="7"/>
    </location>
    <text>Partially edited. RNA editing at this position consists of an insertion of one guanine nucleotide. The sequence displayed here is the V protein, derived from the edited RNA. The unedited RNA gives rise to the P protein (AC Q77M20).</text>
</comment>
<comment type="similarity">
    <text evidence="8">Belongs to the paramyxoviruses V protein family.</text>
</comment>
<sequence length="299" mass="32074">MAEEQARHVKNGLECIRALKAEPIGSLAIEEAMAAWSEISDNPGQERATCREEKAGSSGLSKPCLSAIGSTEGGAPRIRGQGPGESDDDAETLGIPPRNLQASSTGLQCYYVYDHSGEAVKGIQDADSIMVQSGLDGDSTLSGGDNESENSDVDIGEPDTEGYAITDRGSAPISMGFRASDVETAEGGEIHELLRLQSRGNNFPKLGKTLNVPPPPDPGRASTSGTPIKKGHRREISLIWNGDRVFIDRWCNPMCSKVTLGTIRARCTCGECPRVCEQCRTDTGVDTRIWYHNLPEIPE</sequence>
<organism>
    <name type="scientific">Measles virus (strain Edmonston-Schwarz vaccine)</name>
    <name type="common">MeV</name>
    <name type="synonym">Subacute sclerose panencephalitis virus</name>
    <dbReference type="NCBI Taxonomy" id="132487"/>
    <lineage>
        <taxon>Viruses</taxon>
        <taxon>Riboviria</taxon>
        <taxon>Orthornavirae</taxon>
        <taxon>Negarnaviricota</taxon>
        <taxon>Haploviricotina</taxon>
        <taxon>Monjiviricetes</taxon>
        <taxon>Mononegavirales</taxon>
        <taxon>Paramyxoviridae</taxon>
        <taxon>Orthoparamyxovirinae</taxon>
        <taxon>Morbillivirus</taxon>
        <taxon>Morbillivirus hominis</taxon>
        <taxon>Measles morbillivirus</taxon>
    </lineage>
</organism>
<evidence type="ECO:0000250" key="1"/>
<evidence type="ECO:0000250" key="2">
    <source>
        <dbReference type="UniProtKB" id="P0C774"/>
    </source>
</evidence>
<evidence type="ECO:0000250" key="3">
    <source>
        <dbReference type="UniProtKB" id="P11207"/>
    </source>
</evidence>
<evidence type="ECO:0000256" key="4">
    <source>
        <dbReference type="SAM" id="MobiDB-lite"/>
    </source>
</evidence>
<evidence type="ECO:0000269" key="5">
    <source>
    </source>
</evidence>
<evidence type="ECO:0000269" key="6">
    <source>
    </source>
</evidence>
<evidence type="ECO:0000303" key="7">
    <source>
    </source>
</evidence>
<evidence type="ECO:0000305" key="8"/>
<evidence type="ECO:0000312" key="9">
    <source>
        <dbReference type="EMBL" id="AAF85701.2"/>
    </source>
</evidence>
<keyword id="KW-1035">Host cytoplasm</keyword>
<keyword id="KW-0945">Host-virus interaction</keyword>
<keyword id="KW-1090">Inhibition of host innate immune response by virus</keyword>
<keyword id="KW-1114">Inhibition of host interferon signaling pathway by virus</keyword>
<keyword id="KW-1093">Inhibition of host IRF7 by virus</keyword>
<keyword id="KW-1089">Inhibition of host MDA5 by virus</keyword>
<keyword id="KW-1113">Inhibition of host RLR pathway by virus</keyword>
<keyword id="KW-1106">Inhibition of host STAT2 by virus</keyword>
<keyword id="KW-0922">Interferon antiviral system evasion</keyword>
<keyword id="KW-0479">Metal-binding</keyword>
<keyword id="KW-0691">RNA editing</keyword>
<keyword id="KW-0899">Viral immunoevasion</keyword>
<keyword id="KW-0862">Zinc</keyword>
<name>V_MEASW</name>
<accession>Q77M19</accession>
<dbReference type="EMBL" id="AF266291">
    <property type="protein sequence ID" value="AAF85701.2"/>
    <property type="molecule type" value="Genomic_RNA"/>
</dbReference>
<dbReference type="SMR" id="Q77M19"/>
<dbReference type="IntAct" id="Q77M19">
    <property type="interactions" value="447"/>
</dbReference>
<dbReference type="Proteomes" id="UP000115521">
    <property type="component" value="Genome"/>
</dbReference>
<dbReference type="GO" id="GO:0030430">
    <property type="term" value="C:host cell cytoplasm"/>
    <property type="evidence" value="ECO:0007669"/>
    <property type="project" value="UniProtKB-SubCell"/>
</dbReference>
<dbReference type="GO" id="GO:0046872">
    <property type="term" value="F:metal ion binding"/>
    <property type="evidence" value="ECO:0007669"/>
    <property type="project" value="UniProtKB-KW"/>
</dbReference>
<dbReference type="GO" id="GO:0039557">
    <property type="term" value="P:symbiont-mediated suppression of host cytoplasmic pattern recognition receptor signaling pathway via inhibition of IRF7 activity"/>
    <property type="evidence" value="ECO:0007669"/>
    <property type="project" value="UniProtKB-KW"/>
</dbReference>
<dbReference type="GO" id="GO:0039554">
    <property type="term" value="P:symbiont-mediated suppression of host cytoplasmic pattern recognition receptor signaling pathway via inhibition of MDA-5 activity"/>
    <property type="evidence" value="ECO:0007669"/>
    <property type="project" value="UniProtKB-KW"/>
</dbReference>
<dbReference type="GO" id="GO:0039564">
    <property type="term" value="P:symbiont-mediated suppression of host JAK-STAT cascade via inhibition of STAT2 activity"/>
    <property type="evidence" value="ECO:0007669"/>
    <property type="project" value="UniProtKB-KW"/>
</dbReference>
<dbReference type="GO" id="GO:0039502">
    <property type="term" value="P:symbiont-mediated suppression of host type I interferon-mediated signaling pathway"/>
    <property type="evidence" value="ECO:0007669"/>
    <property type="project" value="UniProtKB-KW"/>
</dbReference>
<dbReference type="Gene3D" id="4.10.80.340">
    <property type="match status" value="1"/>
</dbReference>
<dbReference type="InterPro" id="IPR024279">
    <property type="entry name" value="Paramyx_V_Zn-bd"/>
</dbReference>
<dbReference type="InterPro" id="IPR028243">
    <property type="entry name" value="Paramyxo_P/V_N"/>
</dbReference>
<dbReference type="Pfam" id="PF13825">
    <property type="entry name" value="Paramyxo_P_V_N"/>
    <property type="match status" value="1"/>
</dbReference>
<dbReference type="Pfam" id="PF13008">
    <property type="entry name" value="zf-Paramyx-P"/>
    <property type="match status" value="1"/>
</dbReference>
<organismHost>
    <name type="scientific">Homo sapiens</name>
    <name type="common">Human</name>
    <dbReference type="NCBI Taxonomy" id="9606"/>
</organismHost>
<feature type="chain" id="PRO_0000461468" description="Non-structural protein V">
    <location>
        <begin position="1"/>
        <end position="299"/>
    </location>
</feature>
<feature type="region of interest" description="Disordered" evidence="4">
    <location>
        <begin position="41"/>
        <end position="99"/>
    </location>
</feature>
<feature type="region of interest" description="Interaction with host STAT1" evidence="2">
    <location>
        <begin position="110"/>
        <end position="120"/>
    </location>
</feature>
<feature type="region of interest" description="Disordered" evidence="4">
    <location>
        <begin position="134"/>
        <end position="162"/>
    </location>
</feature>
<feature type="compositionally biased region" description="Low complexity" evidence="4">
    <location>
        <begin position="134"/>
        <end position="145"/>
    </location>
</feature>
<feature type="compositionally biased region" description="Acidic residues" evidence="4">
    <location>
        <begin position="146"/>
        <end position="160"/>
    </location>
</feature>
<feature type="binding site" evidence="3">
    <location>
        <position position="232"/>
    </location>
    <ligand>
        <name>Zn(2+)</name>
        <dbReference type="ChEBI" id="CHEBI:29105"/>
        <label>1</label>
    </ligand>
</feature>
<feature type="binding site" evidence="3">
    <location>
        <position position="251"/>
    </location>
    <ligand>
        <name>Zn(2+)</name>
        <dbReference type="ChEBI" id="CHEBI:29105"/>
        <label>1</label>
    </ligand>
</feature>
<feature type="binding site" evidence="3">
    <location>
        <position position="255"/>
    </location>
    <ligand>
        <name>Zn(2+)</name>
        <dbReference type="ChEBI" id="CHEBI:29105"/>
        <label>2</label>
    </ligand>
</feature>
<feature type="binding site" evidence="3">
    <location>
        <position position="267"/>
    </location>
    <ligand>
        <name>Zn(2+)</name>
        <dbReference type="ChEBI" id="CHEBI:29105"/>
        <label>2</label>
    </ligand>
</feature>
<feature type="binding site" evidence="3">
    <location>
        <position position="269"/>
    </location>
    <ligand>
        <name>Zn(2+)</name>
        <dbReference type="ChEBI" id="CHEBI:29105"/>
        <label>2</label>
    </ligand>
</feature>
<feature type="binding site" evidence="3">
    <location>
        <position position="272"/>
    </location>
    <ligand>
        <name>Zn(2+)</name>
        <dbReference type="ChEBI" id="CHEBI:29105"/>
        <label>2</label>
    </ligand>
</feature>
<feature type="binding site" evidence="3">
    <location>
        <position position="276"/>
    </location>
    <ligand>
        <name>Zn(2+)</name>
        <dbReference type="ChEBI" id="CHEBI:29105"/>
        <label>1</label>
    </ligand>
</feature>
<feature type="binding site" evidence="3">
    <location>
        <position position="279"/>
    </location>
    <ligand>
        <name>Zn(2+)</name>
        <dbReference type="ChEBI" id="CHEBI:29105"/>
        <label>1</label>
    </ligand>
</feature>
<feature type="site" description="Interaction with host STAT2" evidence="2">
    <location>
        <position position="240"/>
    </location>
</feature>
<feature type="site" description="Interaction with host STAT2" evidence="2">
    <location>
        <position position="246"/>
    </location>
</feature>
<feature type="site" description="Interaction with host STAT2" evidence="2">
    <location>
        <position position="248"/>
    </location>
</feature>
<feature type="site" description="Interaction with host STAT2" evidence="2">
    <location>
        <position position="250"/>
    </location>
</feature>
<feature type="mutagenesis site" description="Impaired interaction with host STAT1. Loss of ability to block IFN-alpha/beta signaling." evidence="5">
    <original>Y</original>
    <variation>H</variation>
    <location>
        <position position="110"/>
    </location>
</feature>
<reference key="1">
    <citation type="journal article" date="2001" name="J. Virol.">
        <title>Comparison of predicted amino acid sequences of measles virus strains in the Edmonston vaccine lineage.</title>
        <authorList>
            <person name="Parks C.L."/>
            <person name="Lerch R.A."/>
            <person name="Walpita P."/>
            <person name="Wang H.P."/>
            <person name="Sidhu M.S."/>
            <person name="Udem S.A."/>
        </authorList>
    </citation>
    <scope>NUCLEOTIDE SEQUENCE [LARGE SCALE GENOMIC DNA]</scope>
</reference>
<reference key="2">
    <citation type="journal article" date="2011" name="J. Virol.">
        <title>The measles virus V protein binds to p65 (RelA) to suppress NF-kappaB activity.</title>
        <authorList>
            <person name="Schuhmann K.M."/>
            <person name="Pfaller C.K."/>
            <person name="Conzelmann K.K."/>
        </authorList>
    </citation>
    <scope>INTERACTION WITH HOST RELA</scope>
    <source>
        <strain>Schwarz vaccine</strain>
    </source>
</reference>
<reference key="3">
    <citation type="journal article" date="2007" name="Virology">
        <title>Measles virus V protein blocks Jak1-mediated phosphorylation of STAT1 to escape IFN-alpha/beta signaling.</title>
        <authorList>
            <consortium name="Infectious Mapping Project I-MAP"/>
            <person name="Caignard G."/>
            <person name="Guerbois M."/>
            <person name="Labernardiere J.L."/>
            <person name="Jacob Y."/>
            <person name="Jones L.M."/>
            <person name="Wild F."/>
            <person name="Tangy F."/>
            <person name="Vidalain P.O."/>
        </authorList>
    </citation>
    <scope>INTERACTION WITH HOST JAK1</scope>
    <scope>INTERACTION WITH HOST STAT1</scope>
    <scope>DOMAIN</scope>
    <scope>MUTAGENESIS OF TYR-110</scope>
</reference>
<proteinExistence type="evidence at protein level"/>
<protein>
    <recommendedName>
        <fullName>Non-structural protein V</fullName>
    </recommendedName>
</protein>
<gene>
    <name type="primary">P/V</name>
    <name evidence="9" type="synonym">P</name>
</gene>